<name>MUTS_VIBCH</name>
<feature type="chain" id="PRO_0000115164" description="DNA mismatch repair protein MutS">
    <location>
        <begin position="1"/>
        <end position="862"/>
    </location>
</feature>
<feature type="binding site" evidence="1">
    <location>
        <begin position="621"/>
        <end position="628"/>
    </location>
    <ligand>
        <name>ATP</name>
        <dbReference type="ChEBI" id="CHEBI:30616"/>
    </ligand>
</feature>
<reference key="1">
    <citation type="journal article" date="2000" name="Nature">
        <title>DNA sequence of both chromosomes of the cholera pathogen Vibrio cholerae.</title>
        <authorList>
            <person name="Heidelberg J.F."/>
            <person name="Eisen J.A."/>
            <person name="Nelson W.C."/>
            <person name="Clayton R.A."/>
            <person name="Gwinn M.L."/>
            <person name="Dodson R.J."/>
            <person name="Haft D.H."/>
            <person name="Hickey E.K."/>
            <person name="Peterson J.D."/>
            <person name="Umayam L.A."/>
            <person name="Gill S.R."/>
            <person name="Nelson K.E."/>
            <person name="Read T.D."/>
            <person name="Tettelin H."/>
            <person name="Richardson D.L."/>
            <person name="Ermolaeva M.D."/>
            <person name="Vamathevan J.J."/>
            <person name="Bass S."/>
            <person name="Qin H."/>
            <person name="Dragoi I."/>
            <person name="Sellers P."/>
            <person name="McDonald L.A."/>
            <person name="Utterback T.R."/>
            <person name="Fleischmann R.D."/>
            <person name="Nierman W.C."/>
            <person name="White O."/>
            <person name="Salzberg S.L."/>
            <person name="Smith H.O."/>
            <person name="Colwell R.R."/>
            <person name="Mekalanos J.J."/>
            <person name="Venter J.C."/>
            <person name="Fraser C.M."/>
        </authorList>
    </citation>
    <scope>NUCLEOTIDE SEQUENCE [LARGE SCALE GENOMIC DNA]</scope>
    <source>
        <strain>ATCC 39315 / El Tor Inaba N16961</strain>
    </source>
</reference>
<gene>
    <name evidence="1" type="primary">mutS</name>
    <name type="ordered locus">VC_0535</name>
</gene>
<keyword id="KW-0067">ATP-binding</keyword>
<keyword id="KW-0227">DNA damage</keyword>
<keyword id="KW-0234">DNA repair</keyword>
<keyword id="KW-0238">DNA-binding</keyword>
<keyword id="KW-0547">Nucleotide-binding</keyword>
<keyword id="KW-1185">Reference proteome</keyword>
<evidence type="ECO:0000255" key="1">
    <source>
        <dbReference type="HAMAP-Rule" id="MF_00096"/>
    </source>
</evidence>
<comment type="function">
    <text evidence="1">This protein is involved in the repair of mismatches in DNA. It is possible that it carries out the mismatch recognition step. This protein has a weak ATPase activity.</text>
</comment>
<comment type="similarity">
    <text evidence="1">Belongs to the DNA mismatch repair MutS family.</text>
</comment>
<accession>Q9KUI6</accession>
<proteinExistence type="inferred from homology"/>
<dbReference type="EMBL" id="AE003852">
    <property type="protein sequence ID" value="AAF93703.1"/>
    <property type="molecule type" value="Genomic_DNA"/>
</dbReference>
<dbReference type="PIR" id="B82312">
    <property type="entry name" value="B82312"/>
</dbReference>
<dbReference type="RefSeq" id="NP_230186.1">
    <property type="nucleotide sequence ID" value="NC_002505.1"/>
</dbReference>
<dbReference type="RefSeq" id="WP_001894770.1">
    <property type="nucleotide sequence ID" value="NZ_LT906614.1"/>
</dbReference>
<dbReference type="SMR" id="Q9KUI6"/>
<dbReference type="STRING" id="243277.VC_0535"/>
<dbReference type="DNASU" id="2615204"/>
<dbReference type="EnsemblBacteria" id="AAF93703">
    <property type="protein sequence ID" value="AAF93703"/>
    <property type="gene ID" value="VC_0535"/>
</dbReference>
<dbReference type="KEGG" id="vch:VC_0535"/>
<dbReference type="PATRIC" id="fig|243277.26.peg.511"/>
<dbReference type="eggNOG" id="COG0249">
    <property type="taxonomic scope" value="Bacteria"/>
</dbReference>
<dbReference type="HOGENOM" id="CLU_002472_4_0_6"/>
<dbReference type="Proteomes" id="UP000000584">
    <property type="component" value="Chromosome 1"/>
</dbReference>
<dbReference type="GO" id="GO:0005829">
    <property type="term" value="C:cytosol"/>
    <property type="evidence" value="ECO:0000318"/>
    <property type="project" value="GO_Central"/>
</dbReference>
<dbReference type="GO" id="GO:0005524">
    <property type="term" value="F:ATP binding"/>
    <property type="evidence" value="ECO:0007669"/>
    <property type="project" value="UniProtKB-UniRule"/>
</dbReference>
<dbReference type="GO" id="GO:0140664">
    <property type="term" value="F:ATP-dependent DNA damage sensor activity"/>
    <property type="evidence" value="ECO:0007669"/>
    <property type="project" value="InterPro"/>
</dbReference>
<dbReference type="GO" id="GO:0003684">
    <property type="term" value="F:damaged DNA binding"/>
    <property type="evidence" value="ECO:0007669"/>
    <property type="project" value="UniProtKB-UniRule"/>
</dbReference>
<dbReference type="GO" id="GO:0030983">
    <property type="term" value="F:mismatched DNA binding"/>
    <property type="evidence" value="ECO:0000318"/>
    <property type="project" value="GO_Central"/>
</dbReference>
<dbReference type="GO" id="GO:0006298">
    <property type="term" value="P:mismatch repair"/>
    <property type="evidence" value="ECO:0000318"/>
    <property type="project" value="GO_Central"/>
</dbReference>
<dbReference type="CDD" id="cd03284">
    <property type="entry name" value="ABC_MutS1"/>
    <property type="match status" value="1"/>
</dbReference>
<dbReference type="FunFam" id="1.10.1420.10:FF:000002">
    <property type="entry name" value="DNA mismatch repair protein MutS"/>
    <property type="match status" value="1"/>
</dbReference>
<dbReference type="FunFam" id="3.30.420.110:FF:000001">
    <property type="entry name" value="DNA mismatch repair protein MutS"/>
    <property type="match status" value="1"/>
</dbReference>
<dbReference type="FunFam" id="3.40.1170.10:FF:000001">
    <property type="entry name" value="DNA mismatch repair protein MutS"/>
    <property type="match status" value="1"/>
</dbReference>
<dbReference type="FunFam" id="3.40.50.300:FF:000283">
    <property type="entry name" value="DNA mismatch repair protein MutS"/>
    <property type="match status" value="1"/>
</dbReference>
<dbReference type="Gene3D" id="1.10.1420.10">
    <property type="match status" value="2"/>
</dbReference>
<dbReference type="Gene3D" id="6.10.140.430">
    <property type="match status" value="1"/>
</dbReference>
<dbReference type="Gene3D" id="3.40.1170.10">
    <property type="entry name" value="DNA repair protein MutS, domain I"/>
    <property type="match status" value="1"/>
</dbReference>
<dbReference type="Gene3D" id="3.30.420.110">
    <property type="entry name" value="MutS, connector domain"/>
    <property type="match status" value="1"/>
</dbReference>
<dbReference type="Gene3D" id="3.40.50.300">
    <property type="entry name" value="P-loop containing nucleotide triphosphate hydrolases"/>
    <property type="match status" value="1"/>
</dbReference>
<dbReference type="HAMAP" id="MF_00096">
    <property type="entry name" value="MutS"/>
    <property type="match status" value="1"/>
</dbReference>
<dbReference type="InterPro" id="IPR005748">
    <property type="entry name" value="DNA_mismatch_repair_MutS"/>
</dbReference>
<dbReference type="InterPro" id="IPR007695">
    <property type="entry name" value="DNA_mismatch_repair_MutS-lik_N"/>
</dbReference>
<dbReference type="InterPro" id="IPR017261">
    <property type="entry name" value="DNA_mismatch_repair_MutS/MSH"/>
</dbReference>
<dbReference type="InterPro" id="IPR000432">
    <property type="entry name" value="DNA_mismatch_repair_MutS_C"/>
</dbReference>
<dbReference type="InterPro" id="IPR007861">
    <property type="entry name" value="DNA_mismatch_repair_MutS_clamp"/>
</dbReference>
<dbReference type="InterPro" id="IPR007696">
    <property type="entry name" value="DNA_mismatch_repair_MutS_core"/>
</dbReference>
<dbReference type="InterPro" id="IPR016151">
    <property type="entry name" value="DNA_mismatch_repair_MutS_N"/>
</dbReference>
<dbReference type="InterPro" id="IPR036187">
    <property type="entry name" value="DNA_mismatch_repair_MutS_sf"/>
</dbReference>
<dbReference type="InterPro" id="IPR007860">
    <property type="entry name" value="DNA_mmatch_repair_MutS_con_dom"/>
</dbReference>
<dbReference type="InterPro" id="IPR045076">
    <property type="entry name" value="MutS"/>
</dbReference>
<dbReference type="InterPro" id="IPR036678">
    <property type="entry name" value="MutS_con_dom_sf"/>
</dbReference>
<dbReference type="InterPro" id="IPR027417">
    <property type="entry name" value="P-loop_NTPase"/>
</dbReference>
<dbReference type="NCBIfam" id="TIGR01070">
    <property type="entry name" value="mutS1"/>
    <property type="match status" value="1"/>
</dbReference>
<dbReference type="NCBIfam" id="NF003810">
    <property type="entry name" value="PRK05399.1"/>
    <property type="match status" value="1"/>
</dbReference>
<dbReference type="PANTHER" id="PTHR11361:SF34">
    <property type="entry name" value="DNA MISMATCH REPAIR PROTEIN MSH1, MITOCHONDRIAL"/>
    <property type="match status" value="1"/>
</dbReference>
<dbReference type="PANTHER" id="PTHR11361">
    <property type="entry name" value="DNA MISMATCH REPAIR PROTEIN MUTS FAMILY MEMBER"/>
    <property type="match status" value="1"/>
</dbReference>
<dbReference type="Pfam" id="PF01624">
    <property type="entry name" value="MutS_I"/>
    <property type="match status" value="1"/>
</dbReference>
<dbReference type="Pfam" id="PF05188">
    <property type="entry name" value="MutS_II"/>
    <property type="match status" value="1"/>
</dbReference>
<dbReference type="Pfam" id="PF05192">
    <property type="entry name" value="MutS_III"/>
    <property type="match status" value="1"/>
</dbReference>
<dbReference type="Pfam" id="PF05190">
    <property type="entry name" value="MutS_IV"/>
    <property type="match status" value="1"/>
</dbReference>
<dbReference type="Pfam" id="PF00488">
    <property type="entry name" value="MutS_V"/>
    <property type="match status" value="1"/>
</dbReference>
<dbReference type="PIRSF" id="PIRSF037677">
    <property type="entry name" value="DNA_mis_repair_Msh6"/>
    <property type="match status" value="1"/>
</dbReference>
<dbReference type="SMART" id="SM00534">
    <property type="entry name" value="MUTSac"/>
    <property type="match status" value="1"/>
</dbReference>
<dbReference type="SMART" id="SM00533">
    <property type="entry name" value="MUTSd"/>
    <property type="match status" value="1"/>
</dbReference>
<dbReference type="SUPFAM" id="SSF55271">
    <property type="entry name" value="DNA repair protein MutS, domain I"/>
    <property type="match status" value="1"/>
</dbReference>
<dbReference type="SUPFAM" id="SSF53150">
    <property type="entry name" value="DNA repair protein MutS, domain II"/>
    <property type="match status" value="1"/>
</dbReference>
<dbReference type="SUPFAM" id="SSF48334">
    <property type="entry name" value="DNA repair protein MutS, domain III"/>
    <property type="match status" value="1"/>
</dbReference>
<dbReference type="SUPFAM" id="SSF52540">
    <property type="entry name" value="P-loop containing nucleoside triphosphate hydrolases"/>
    <property type="match status" value="1"/>
</dbReference>
<dbReference type="PROSITE" id="PS00486">
    <property type="entry name" value="DNA_MISMATCH_REPAIR_2"/>
    <property type="match status" value="1"/>
</dbReference>
<organism>
    <name type="scientific">Vibrio cholerae serotype O1 (strain ATCC 39315 / El Tor Inaba N16961)</name>
    <dbReference type="NCBI Taxonomy" id="243277"/>
    <lineage>
        <taxon>Bacteria</taxon>
        <taxon>Pseudomonadati</taxon>
        <taxon>Pseudomonadota</taxon>
        <taxon>Gammaproteobacteria</taxon>
        <taxon>Vibrionales</taxon>
        <taxon>Vibrionaceae</taxon>
        <taxon>Vibrio</taxon>
    </lineage>
</organism>
<sequence length="862" mass="96327">MMKSNASPSESLSHHTPMMQQYLRLKAENPDILLFYRMGDFYELFYDDAKRASELLDISLTKRGASAGEPIPMAGVPFHAVEGYLAKLVQMGESVAICEQIGDPATSKGPVERKVVRIVTPGTVTDEALLSERVDNLIAAIYHHNGRFGYATMDITSGRFQLSEPQTEEEMAAELQRTSPRELLFPEDFSPVHLMASRQGNRRRPIWEFELDTAKQQLNQQFGTRDLVGFGVEQAKLGLCAAGCLIQYVKDTQRTALPHIRSLTWDRQDQSVILDAATRRNLELTHNLAGGTDNTLAEVLDHCATPMGSRMLKRWIHQPMRDNATLNQRLDAITELKETALYGELHPVLKQIGDIERILARLALRSARPRDLARLRHAMQQLPELHSVMSELKQPHLTELRTHAEPMDELCDLLERAIKENPPVVIRDGGVIADGYSAELDEWRDLANGATEFLERLEAEERDRHGIDTLKVGYNNVHGFYIQVSRGQSHLVPPHYVRRQTLKNAERYIIEELKQHEDKVLNSKSRALALEKQLWEELFDLLMPHLEQLQQLAASVAQLDVLQNLAERAENLEYCRPTLVQEAGIHIQGGRHPVVERVMNEPFIANPIELNPQRRMLIITGPNMGGKSTYMRQTALIALMAHIGSYVPAESASIGPLDRIFTRIGASDDLASGRSTFMVEMTETANILHNATRNSLVLMDEIGRGTSTYDGLSLAWASAEWLAKEIGAMTLFATHYFELTELPNVLPHLANVHLDAVEHGDGIAFMHAVQEGAASKSYGLAVAGLAGVPKPVIKNARAKLQQLELLSSQPAETRKPSRVDIANQLSLIPEPSAVEQALAGVDPDQLTPRQALDMLYQLKKLL</sequence>
<protein>
    <recommendedName>
        <fullName evidence="1">DNA mismatch repair protein MutS</fullName>
    </recommendedName>
</protein>